<comment type="function">
    <text>Metallothioneins have a high content of cysteine residues that bind various heavy metals; these proteins are transcriptionally regulated by both heavy metals and glucocorticoids.</text>
</comment>
<comment type="subunit">
    <text evidence="1">Monomer.</text>
</comment>
<comment type="domain">
    <text>Class I metallothioneins contain 2 metal-binding domains: four divalent ions are chelated within cluster A of the alpha domain and are coordinated via cysteinyl thiolate bridges to 11 cysteine ligands. Cluster B, the corresponding region within the beta domain, can ligate three divalent ions to 9 cysteines.</text>
</comment>
<comment type="similarity">
    <text evidence="4">Belongs to the metallothionein superfamily. Type 1 family.</text>
</comment>
<gene>
    <name type="primary">MT2B</name>
</gene>
<protein>
    <recommendedName>
        <fullName>Metallothionein-2B</fullName>
        <shortName>MT-2B</shortName>
    </recommendedName>
    <alternativeName>
        <fullName>Metallothionein-IIB</fullName>
        <shortName>MT-IIB</shortName>
    </alternativeName>
</protein>
<organism>
    <name type="scientific">Sus scrofa</name>
    <name type="common">Pig</name>
    <dbReference type="NCBI Taxonomy" id="9823"/>
    <lineage>
        <taxon>Eukaryota</taxon>
        <taxon>Metazoa</taxon>
        <taxon>Chordata</taxon>
        <taxon>Craniata</taxon>
        <taxon>Vertebrata</taxon>
        <taxon>Euteleostomi</taxon>
        <taxon>Mammalia</taxon>
        <taxon>Eutheria</taxon>
        <taxon>Laurasiatheria</taxon>
        <taxon>Artiodactyla</taxon>
        <taxon>Suina</taxon>
        <taxon>Suidae</taxon>
        <taxon>Sus</taxon>
    </lineage>
</organism>
<keyword id="KW-0007">Acetylation</keyword>
<keyword id="KW-0479">Metal-binding</keyword>
<keyword id="KW-0480">Metal-thiolate cluster</keyword>
<keyword id="KW-1185">Reference proteome</keyword>
<reference key="1">
    <citation type="journal article" date="1998" name="Gene">
        <title>Multiple isoforms of metallothionein are expressed in the porcine liver.</title>
        <authorList>
            <person name="Huang M.-C."/>
            <person name="Pan P.K."/>
            <person name="Zheng T.F."/>
            <person name="Chen N.C."/>
            <person name="Peng J.Y."/>
            <person name="Huang P.C."/>
        </authorList>
    </citation>
    <scope>NUCLEOTIDE SEQUENCE [MRNA]</scope>
    <source>
        <tissue>Liver</tissue>
    </source>
</reference>
<sequence>MDPNCSCAAGGSCTCAGSCKCKDCRCTSCKKSCCSCCPAGCARCAQGCICKGASDKCSCCA</sequence>
<evidence type="ECO:0000250" key="1"/>
<evidence type="ECO:0000250" key="2">
    <source>
        <dbReference type="UniProtKB" id="P02795"/>
    </source>
</evidence>
<evidence type="ECO:0000250" key="3">
    <source>
        <dbReference type="UniProtKB" id="P80289"/>
    </source>
</evidence>
<evidence type="ECO:0000305" key="4"/>
<dbReference type="EMBL" id="AB000795">
    <property type="protein sequence ID" value="BAA19184.1"/>
    <property type="molecule type" value="mRNA"/>
</dbReference>
<dbReference type="SMR" id="P79380"/>
<dbReference type="FunCoup" id="P79380">
    <property type="interactions" value="61"/>
</dbReference>
<dbReference type="InParanoid" id="P79380"/>
<dbReference type="Proteomes" id="UP000008227">
    <property type="component" value="Unplaced"/>
</dbReference>
<dbReference type="Proteomes" id="UP000314985">
    <property type="component" value="Unplaced"/>
</dbReference>
<dbReference type="Proteomes" id="UP000694570">
    <property type="component" value="Unplaced"/>
</dbReference>
<dbReference type="Proteomes" id="UP000694571">
    <property type="component" value="Unplaced"/>
</dbReference>
<dbReference type="Proteomes" id="UP000694720">
    <property type="component" value="Unplaced"/>
</dbReference>
<dbReference type="Proteomes" id="UP000694722">
    <property type="component" value="Unplaced"/>
</dbReference>
<dbReference type="Proteomes" id="UP000694723">
    <property type="component" value="Unplaced"/>
</dbReference>
<dbReference type="Proteomes" id="UP000694724">
    <property type="component" value="Unplaced"/>
</dbReference>
<dbReference type="Proteomes" id="UP000694725">
    <property type="component" value="Unplaced"/>
</dbReference>
<dbReference type="Proteomes" id="UP000694726">
    <property type="component" value="Unplaced"/>
</dbReference>
<dbReference type="Proteomes" id="UP000694727">
    <property type="component" value="Unplaced"/>
</dbReference>
<dbReference type="Proteomes" id="UP000694728">
    <property type="component" value="Unplaced"/>
</dbReference>
<dbReference type="GO" id="GO:0005737">
    <property type="term" value="C:cytoplasm"/>
    <property type="evidence" value="ECO:0000250"/>
    <property type="project" value="UniProtKB"/>
</dbReference>
<dbReference type="GO" id="GO:0005634">
    <property type="term" value="C:nucleus"/>
    <property type="evidence" value="ECO:0000250"/>
    <property type="project" value="UniProtKB"/>
</dbReference>
<dbReference type="GO" id="GO:0046872">
    <property type="term" value="F:metal ion binding"/>
    <property type="evidence" value="ECO:0000318"/>
    <property type="project" value="GO_Central"/>
</dbReference>
<dbReference type="GO" id="GO:0008270">
    <property type="term" value="F:zinc ion binding"/>
    <property type="evidence" value="ECO:0000250"/>
    <property type="project" value="UniProtKB"/>
</dbReference>
<dbReference type="GO" id="GO:0071276">
    <property type="term" value="P:cellular response to cadmium ion"/>
    <property type="evidence" value="ECO:0000318"/>
    <property type="project" value="GO_Central"/>
</dbReference>
<dbReference type="GO" id="GO:0071280">
    <property type="term" value="P:cellular response to copper ion"/>
    <property type="evidence" value="ECO:0000318"/>
    <property type="project" value="GO_Central"/>
</dbReference>
<dbReference type="GO" id="GO:0071294">
    <property type="term" value="P:cellular response to zinc ion"/>
    <property type="evidence" value="ECO:0000250"/>
    <property type="project" value="UniProtKB"/>
</dbReference>
<dbReference type="GO" id="GO:0010273">
    <property type="term" value="P:detoxification of copper ion"/>
    <property type="evidence" value="ECO:0000318"/>
    <property type="project" value="GO_Central"/>
</dbReference>
<dbReference type="GO" id="GO:0006882">
    <property type="term" value="P:intracellular zinc ion homeostasis"/>
    <property type="evidence" value="ECO:0000318"/>
    <property type="project" value="GO_Central"/>
</dbReference>
<dbReference type="GO" id="GO:0045926">
    <property type="term" value="P:negative regulation of growth"/>
    <property type="evidence" value="ECO:0000250"/>
    <property type="project" value="UniProtKB"/>
</dbReference>
<dbReference type="FunFam" id="4.10.10.10:FF:000001">
    <property type="entry name" value="Metallothionein"/>
    <property type="match status" value="1"/>
</dbReference>
<dbReference type="Gene3D" id="4.10.10.10">
    <property type="entry name" value="Metallothionein Isoform II"/>
    <property type="match status" value="1"/>
</dbReference>
<dbReference type="InterPro" id="IPR017854">
    <property type="entry name" value="Metalthion_dom_sf"/>
</dbReference>
<dbReference type="InterPro" id="IPR023587">
    <property type="entry name" value="Metalthion_dom_sf_vert"/>
</dbReference>
<dbReference type="InterPro" id="IPR000006">
    <property type="entry name" value="Metalthion_vert"/>
</dbReference>
<dbReference type="InterPro" id="IPR018064">
    <property type="entry name" value="Metalthion_vert_metal_BS"/>
</dbReference>
<dbReference type="PANTHER" id="PTHR23299">
    <property type="entry name" value="METALLOTHIONEIN"/>
    <property type="match status" value="1"/>
</dbReference>
<dbReference type="PANTHER" id="PTHR23299:SF38">
    <property type="entry name" value="METALLOTHIONEIN-2B"/>
    <property type="match status" value="1"/>
</dbReference>
<dbReference type="Pfam" id="PF00131">
    <property type="entry name" value="Metallothio"/>
    <property type="match status" value="1"/>
</dbReference>
<dbReference type="PRINTS" id="PR00860">
    <property type="entry name" value="MTVERTEBRATE"/>
</dbReference>
<dbReference type="SUPFAM" id="SSF57868">
    <property type="entry name" value="Metallothionein"/>
    <property type="match status" value="1"/>
</dbReference>
<dbReference type="PROSITE" id="PS00203">
    <property type="entry name" value="METALLOTHIONEIN_VRT"/>
    <property type="match status" value="1"/>
</dbReference>
<accession>P79380</accession>
<proteinExistence type="inferred from homology"/>
<name>MT2B_PIG</name>
<feature type="chain" id="PRO_0000197214" description="Metallothionein-2B">
    <location>
        <begin position="1"/>
        <end position="61"/>
    </location>
</feature>
<feature type="region of interest" description="Beta">
    <location>
        <begin position="1"/>
        <end position="29"/>
    </location>
</feature>
<feature type="region of interest" description="Alpha">
    <location>
        <begin position="30"/>
        <end position="61"/>
    </location>
</feature>
<feature type="binding site" evidence="2">
    <location>
        <position position="5"/>
    </location>
    <ligand>
        <name>a divalent metal cation</name>
        <dbReference type="ChEBI" id="CHEBI:60240"/>
        <label>1</label>
        <note>in cluster B</note>
    </ligand>
</feature>
<feature type="binding site" evidence="2">
    <location>
        <position position="7"/>
    </location>
    <ligand>
        <name>a divalent metal cation</name>
        <dbReference type="ChEBI" id="CHEBI:60240"/>
        <label>1</label>
        <note>in cluster B</note>
    </ligand>
</feature>
<feature type="binding site" evidence="2">
    <location>
        <position position="7"/>
    </location>
    <ligand>
        <name>a divalent metal cation</name>
        <dbReference type="ChEBI" id="CHEBI:60240"/>
        <label>2</label>
        <note>in cluster B</note>
    </ligand>
</feature>
<feature type="binding site" evidence="2">
    <location>
        <position position="13"/>
    </location>
    <ligand>
        <name>a divalent metal cation</name>
        <dbReference type="ChEBI" id="CHEBI:60240"/>
        <label>2</label>
        <note>in cluster B</note>
    </ligand>
</feature>
<feature type="binding site" evidence="2">
    <location>
        <position position="15"/>
    </location>
    <ligand>
        <name>a divalent metal cation</name>
        <dbReference type="ChEBI" id="CHEBI:60240"/>
        <label>2</label>
        <note>in cluster B</note>
    </ligand>
</feature>
<feature type="binding site" evidence="2">
    <location>
        <position position="15"/>
    </location>
    <ligand>
        <name>a divalent metal cation</name>
        <dbReference type="ChEBI" id="CHEBI:60240"/>
        <label>3</label>
        <note>in cluster B</note>
    </ligand>
</feature>
<feature type="binding site" evidence="2">
    <location>
        <position position="19"/>
    </location>
    <ligand>
        <name>a divalent metal cation</name>
        <dbReference type="ChEBI" id="CHEBI:60240"/>
        <label>3</label>
        <note>in cluster B</note>
    </ligand>
</feature>
<feature type="binding site" evidence="2">
    <location>
        <position position="21"/>
    </location>
    <ligand>
        <name>a divalent metal cation</name>
        <dbReference type="ChEBI" id="CHEBI:60240"/>
        <label>1</label>
        <note>in cluster B</note>
    </ligand>
</feature>
<feature type="binding site" evidence="2">
    <location>
        <position position="24"/>
    </location>
    <ligand>
        <name>a divalent metal cation</name>
        <dbReference type="ChEBI" id="CHEBI:60240"/>
        <label>1</label>
        <note>in cluster B</note>
    </ligand>
</feature>
<feature type="binding site" evidence="2">
    <location>
        <position position="24"/>
    </location>
    <ligand>
        <name>a divalent metal cation</name>
        <dbReference type="ChEBI" id="CHEBI:60240"/>
        <label>3</label>
        <note>in cluster B</note>
    </ligand>
</feature>
<feature type="binding site" evidence="2">
    <location>
        <position position="26"/>
    </location>
    <ligand>
        <name>a divalent metal cation</name>
        <dbReference type="ChEBI" id="CHEBI:60240"/>
        <label>2</label>
        <note>in cluster B</note>
    </ligand>
</feature>
<feature type="binding site" evidence="2">
    <location>
        <position position="29"/>
    </location>
    <ligand>
        <name>a divalent metal cation</name>
        <dbReference type="ChEBI" id="CHEBI:60240"/>
        <label>3</label>
        <note>in cluster B</note>
    </ligand>
</feature>
<feature type="binding site" evidence="2">
    <location>
        <position position="33"/>
    </location>
    <ligand>
        <name>a divalent metal cation</name>
        <dbReference type="ChEBI" id="CHEBI:60240"/>
        <label>4</label>
        <note>in cluster A</note>
    </ligand>
</feature>
<feature type="binding site" evidence="2">
    <location>
        <position position="34"/>
    </location>
    <ligand>
        <name>a divalent metal cation</name>
        <dbReference type="ChEBI" id="CHEBI:60240"/>
        <label>4</label>
        <note>in cluster A</note>
    </ligand>
</feature>
<feature type="binding site" evidence="2">
    <location>
        <position position="34"/>
    </location>
    <ligand>
        <name>a divalent metal cation</name>
        <dbReference type="ChEBI" id="CHEBI:60240"/>
        <label>5</label>
        <note>in cluster A</note>
    </ligand>
</feature>
<feature type="binding site" evidence="2">
    <location>
        <position position="36"/>
    </location>
    <ligand>
        <name>a divalent metal cation</name>
        <dbReference type="ChEBI" id="CHEBI:60240"/>
        <label>5</label>
        <note>in cluster A</note>
    </ligand>
</feature>
<feature type="binding site" evidence="2">
    <location>
        <position position="37"/>
    </location>
    <ligand>
        <name>a divalent metal cation</name>
        <dbReference type="ChEBI" id="CHEBI:60240"/>
        <label>5</label>
        <note>in cluster A</note>
    </ligand>
</feature>
<feature type="binding site" evidence="2">
    <location>
        <position position="37"/>
    </location>
    <ligand>
        <name>a divalent metal cation</name>
        <dbReference type="ChEBI" id="CHEBI:60240"/>
        <label>6</label>
        <note>in cluster A</note>
    </ligand>
</feature>
<feature type="binding site" evidence="2">
    <location>
        <position position="41"/>
    </location>
    <ligand>
        <name>a divalent metal cation</name>
        <dbReference type="ChEBI" id="CHEBI:60240"/>
        <label>6</label>
        <note>in cluster A</note>
    </ligand>
</feature>
<feature type="binding site" evidence="2">
    <location>
        <position position="44"/>
    </location>
    <ligand>
        <name>a divalent metal cation</name>
        <dbReference type="ChEBI" id="CHEBI:60240"/>
        <label>4</label>
        <note>in cluster A</note>
    </ligand>
</feature>
<feature type="binding site" evidence="2">
    <location>
        <position position="44"/>
    </location>
    <ligand>
        <name>a divalent metal cation</name>
        <dbReference type="ChEBI" id="CHEBI:60240"/>
        <label>6</label>
        <note>in cluster A</note>
    </ligand>
</feature>
<feature type="binding site" evidence="2">
    <location>
        <position position="48"/>
    </location>
    <ligand>
        <name>a divalent metal cation</name>
        <dbReference type="ChEBI" id="CHEBI:60240"/>
        <label>4</label>
        <note>in cluster A</note>
    </ligand>
</feature>
<feature type="binding site" evidence="2">
    <location>
        <position position="50"/>
    </location>
    <ligand>
        <name>a divalent metal cation</name>
        <dbReference type="ChEBI" id="CHEBI:60240"/>
        <label>5</label>
        <note>in cluster A</note>
    </ligand>
</feature>
<feature type="binding site" evidence="2">
    <location>
        <position position="50"/>
    </location>
    <ligand>
        <name>a divalent metal cation</name>
        <dbReference type="ChEBI" id="CHEBI:60240"/>
        <label>7</label>
        <note>in cluster A</note>
    </ligand>
</feature>
<feature type="binding site" evidence="2">
    <location>
        <position position="57"/>
    </location>
    <ligand>
        <name>a divalent metal cation</name>
        <dbReference type="ChEBI" id="CHEBI:60240"/>
        <label>7</label>
        <note>in cluster A</note>
    </ligand>
</feature>
<feature type="binding site" evidence="2">
    <location>
        <position position="59"/>
    </location>
    <ligand>
        <name>a divalent metal cation</name>
        <dbReference type="ChEBI" id="CHEBI:60240"/>
        <label>7</label>
        <note>in cluster A</note>
    </ligand>
</feature>
<feature type="binding site" evidence="2">
    <location>
        <position position="60"/>
    </location>
    <ligand>
        <name>a divalent metal cation</name>
        <dbReference type="ChEBI" id="CHEBI:60240"/>
        <label>6</label>
        <note>in cluster A</note>
    </ligand>
</feature>
<feature type="binding site" evidence="2">
    <location>
        <position position="60"/>
    </location>
    <ligand>
        <name>a divalent metal cation</name>
        <dbReference type="ChEBI" id="CHEBI:60240"/>
        <label>7</label>
        <note>in cluster A</note>
    </ligand>
</feature>
<feature type="modified residue" description="N-acetylmethionine" evidence="3">
    <location>
        <position position="1"/>
    </location>
</feature>
<feature type="unsure residue">
    <location>
        <begin position="49"/>
        <end position="61"/>
    </location>
</feature>